<evidence type="ECO:0000250" key="1">
    <source>
        <dbReference type="UniProtKB" id="Q16602"/>
    </source>
</evidence>
<evidence type="ECO:0000255" key="2"/>
<evidence type="ECO:0000305" key="3"/>
<gene>
    <name type="primary">calcrla</name>
    <name type="synonym">calcrl</name>
    <name type="ORF">si:dkey-249o24.2</name>
    <name type="ORF">zgc:100872</name>
</gene>
<comment type="function">
    <text evidence="1">May function as G protein-coupled receptor for calcitonin-gene-related peptides and adrenomedullin (By similarity). Specificity may be modulated by accessory proteins (By similarity). May activate cAMP-dependent pathway (By similarity).</text>
</comment>
<comment type="subcellular location">
    <subcellularLocation>
        <location evidence="1">Cell membrane</location>
        <topology evidence="1">Multi-pass membrane protein</topology>
    </subcellularLocation>
</comment>
<comment type="similarity">
    <text evidence="3">Belongs to the G-protein coupled receptor 2 family.</text>
</comment>
<comment type="sequence caution" evidence="3">
    <conflict type="erroneous initiation">
        <sequence resource="EMBL-CDS" id="CAQ13571"/>
    </conflict>
</comment>
<sequence length="470" mass="54102">MTASCWTICLFLLGSVTEFIVLASPEVNESQQQHPQNVYHDIGVTRNKIVTAQFECYQKIMKDNSQDRRGPVCNRTWDGWLCWDDTEAGITSEQHCPDYFQDFDPTEMVTKICTESGQWFLHPESNRTWTNFTRCNLHTTEGRRTAMNLFYLALIGHGLSLTSLFISLGIFFHFKSLSCQRITLHKNLFFSFVLNSIITIIWLTAVANNQELVQQNPISCKISQFIHLYIFGCNYFWMLCEGIYLHTLIVVAVFAEKQHLMWYYLLGWGFPLIPATIHAVARSYYYNDNCWISSNTSLLYIIHGPICAAMLVNLFFLLNIVRVLITKLKVTHQAKSSLYMKAVRATLILVPLLGIQYVLLPYKPSGRVSAEIYDYIMHILMHYQGLLVATIFCFFNGEVQAVLRRHWNQYRIQFGSTITQSDALRSASYTASSITEVQGCYSIDGHTEHLNGKNYHDFDNAIIKPENPFA</sequence>
<organism>
    <name type="scientific">Danio rerio</name>
    <name type="common">Zebrafish</name>
    <name type="synonym">Brachydanio rerio</name>
    <dbReference type="NCBI Taxonomy" id="7955"/>
    <lineage>
        <taxon>Eukaryota</taxon>
        <taxon>Metazoa</taxon>
        <taxon>Chordata</taxon>
        <taxon>Craniata</taxon>
        <taxon>Vertebrata</taxon>
        <taxon>Euteleostomi</taxon>
        <taxon>Actinopterygii</taxon>
        <taxon>Neopterygii</taxon>
        <taxon>Teleostei</taxon>
        <taxon>Ostariophysi</taxon>
        <taxon>Cypriniformes</taxon>
        <taxon>Danionidae</taxon>
        <taxon>Danioninae</taxon>
        <taxon>Danio</taxon>
    </lineage>
</organism>
<protein>
    <recommendedName>
        <fullName>Calcitonin gene-related peptide type 1 receptor</fullName>
        <shortName>CGRP type 1 receptor</shortName>
    </recommendedName>
    <alternativeName>
        <fullName>Calcitonin receptor-like receptor</fullName>
    </alternativeName>
</protein>
<keyword id="KW-1003">Cell membrane</keyword>
<keyword id="KW-1015">Disulfide bond</keyword>
<keyword id="KW-0297">G-protein coupled receptor</keyword>
<keyword id="KW-0325">Glycoprotein</keyword>
<keyword id="KW-0472">Membrane</keyword>
<keyword id="KW-0675">Receptor</keyword>
<keyword id="KW-1185">Reference proteome</keyword>
<keyword id="KW-0732">Signal</keyword>
<keyword id="KW-0807">Transducer</keyword>
<keyword id="KW-0812">Transmembrane</keyword>
<keyword id="KW-1133">Transmembrane helix</keyword>
<dbReference type="EMBL" id="BX470245">
    <property type="protein sequence ID" value="CAQ13571.1"/>
    <property type="status" value="ALT_INIT"/>
    <property type="molecule type" value="Genomic_DNA"/>
</dbReference>
<dbReference type="EMBL" id="BC080226">
    <property type="protein sequence ID" value="AAH80226.1"/>
    <property type="molecule type" value="mRNA"/>
</dbReference>
<dbReference type="EMBL" id="BC129300">
    <property type="protein sequence ID" value="AAI29301.1"/>
    <property type="molecule type" value="mRNA"/>
</dbReference>
<dbReference type="RefSeq" id="NP_001004010.1">
    <property type="nucleotide sequence ID" value="NM_001004010.1"/>
</dbReference>
<dbReference type="SMR" id="Q68EK2"/>
<dbReference type="FunCoup" id="Q68EK2">
    <property type="interactions" value="715"/>
</dbReference>
<dbReference type="STRING" id="7955.ENSDARP00000118958"/>
<dbReference type="GlyCosmos" id="Q68EK2">
    <property type="glycosylation" value="5 sites, No reported glycans"/>
</dbReference>
<dbReference type="PaxDb" id="7955-ENSDARP00000111592"/>
<dbReference type="GeneID" id="445508"/>
<dbReference type="KEGG" id="dre:445508"/>
<dbReference type="AGR" id="ZFIN:ZDB-GENE-040822-26"/>
<dbReference type="CTD" id="445508"/>
<dbReference type="ZFIN" id="ZDB-GENE-040822-26">
    <property type="gene designation" value="calcrla"/>
</dbReference>
<dbReference type="eggNOG" id="KOG4564">
    <property type="taxonomic scope" value="Eukaryota"/>
</dbReference>
<dbReference type="InParanoid" id="Q68EK2"/>
<dbReference type="OrthoDB" id="16753at2759"/>
<dbReference type="PhylomeDB" id="Q68EK2"/>
<dbReference type="TreeFam" id="TF315710"/>
<dbReference type="Reactome" id="R-DRE-419812">
    <property type="pathway name" value="Calcitonin-like ligand receptors"/>
</dbReference>
<dbReference type="PRO" id="PR:Q68EK2"/>
<dbReference type="Proteomes" id="UP000000437">
    <property type="component" value="Chromosome 9"/>
</dbReference>
<dbReference type="GO" id="GO:0005886">
    <property type="term" value="C:plasma membrane"/>
    <property type="evidence" value="ECO:0000318"/>
    <property type="project" value="GO_Central"/>
</dbReference>
<dbReference type="GO" id="GO:0001605">
    <property type="term" value="F:adrenomedullin receptor activity"/>
    <property type="evidence" value="ECO:0000318"/>
    <property type="project" value="GO_Central"/>
</dbReference>
<dbReference type="GO" id="GO:0001635">
    <property type="term" value="F:calcitonin gene-related peptide receptor activity"/>
    <property type="evidence" value="ECO:0000318"/>
    <property type="project" value="GO_Central"/>
</dbReference>
<dbReference type="GO" id="GO:0004948">
    <property type="term" value="F:calcitonin receptor activity"/>
    <property type="evidence" value="ECO:0007669"/>
    <property type="project" value="InterPro"/>
</dbReference>
<dbReference type="GO" id="GO:0007189">
    <property type="term" value="P:adenylate cyclase-activating G protein-coupled receptor signaling pathway"/>
    <property type="evidence" value="ECO:0000318"/>
    <property type="project" value="GO_Central"/>
</dbReference>
<dbReference type="GO" id="GO:0001525">
    <property type="term" value="P:angiogenesis"/>
    <property type="evidence" value="ECO:0000315"/>
    <property type="project" value="ZFIN"/>
</dbReference>
<dbReference type="GO" id="GO:0048844">
    <property type="term" value="P:artery morphogenesis"/>
    <property type="evidence" value="ECO:0000315"/>
    <property type="project" value="ZFIN"/>
</dbReference>
<dbReference type="GO" id="GO:0007166">
    <property type="term" value="P:cell surface receptor signaling pathway"/>
    <property type="evidence" value="ECO:0007669"/>
    <property type="project" value="InterPro"/>
</dbReference>
<dbReference type="GO" id="GO:0055064">
    <property type="term" value="P:chloride ion homeostasis"/>
    <property type="evidence" value="ECO:0000315"/>
    <property type="project" value="ZFIN"/>
</dbReference>
<dbReference type="GO" id="GO:0001756">
    <property type="term" value="P:somitogenesis"/>
    <property type="evidence" value="ECO:0000316"/>
    <property type="project" value="ZFIN"/>
</dbReference>
<dbReference type="CDD" id="cd15274">
    <property type="entry name" value="7tmB1_calcitonin_R"/>
    <property type="match status" value="1"/>
</dbReference>
<dbReference type="FunFam" id="1.20.1070.10:FF:000079">
    <property type="entry name" value="Calcitonin gene-related peptide type 1 receptor"/>
    <property type="match status" value="1"/>
</dbReference>
<dbReference type="FunFam" id="4.10.1240.10:FF:000011">
    <property type="entry name" value="Calcitonin gene-related peptide type 1 receptor"/>
    <property type="match status" value="1"/>
</dbReference>
<dbReference type="Gene3D" id="4.10.1240.10">
    <property type="entry name" value="GPCR, family 2, extracellular hormone receptor domain"/>
    <property type="match status" value="1"/>
</dbReference>
<dbReference type="Gene3D" id="1.20.1070.10">
    <property type="entry name" value="Rhodopsin 7-helix transmembrane proteins"/>
    <property type="match status" value="1"/>
</dbReference>
<dbReference type="InterPro" id="IPR050332">
    <property type="entry name" value="GPCR_2"/>
</dbReference>
<dbReference type="InterPro" id="IPR017981">
    <property type="entry name" value="GPCR_2-like_7TM"/>
</dbReference>
<dbReference type="InterPro" id="IPR003287">
    <property type="entry name" value="GPCR_2_calcitonin_rcpt_fam"/>
</dbReference>
<dbReference type="InterPro" id="IPR003289">
    <property type="entry name" value="GPCR_2_CGRP1_rcpt"/>
</dbReference>
<dbReference type="InterPro" id="IPR036445">
    <property type="entry name" value="GPCR_2_extracell_dom_sf"/>
</dbReference>
<dbReference type="InterPro" id="IPR001879">
    <property type="entry name" value="GPCR_2_extracellular_dom"/>
</dbReference>
<dbReference type="InterPro" id="IPR000832">
    <property type="entry name" value="GPCR_2_secretin-like"/>
</dbReference>
<dbReference type="InterPro" id="IPR017983">
    <property type="entry name" value="GPCR_2_secretin-like_CS"/>
</dbReference>
<dbReference type="PANTHER" id="PTHR45620:SF21">
    <property type="entry name" value="CALCITONIN GENE-RELATED PEPTIDE TYPE 1 RECEPTOR"/>
    <property type="match status" value="1"/>
</dbReference>
<dbReference type="PANTHER" id="PTHR45620">
    <property type="entry name" value="PDF RECEPTOR-LIKE PROTEIN-RELATED"/>
    <property type="match status" value="1"/>
</dbReference>
<dbReference type="Pfam" id="PF00002">
    <property type="entry name" value="7tm_2"/>
    <property type="match status" value="1"/>
</dbReference>
<dbReference type="Pfam" id="PF02793">
    <property type="entry name" value="HRM"/>
    <property type="match status" value="1"/>
</dbReference>
<dbReference type="PRINTS" id="PR01351">
    <property type="entry name" value="CGRPRECEPTOR"/>
</dbReference>
<dbReference type="PRINTS" id="PR01350">
    <property type="entry name" value="CTRFAMILY"/>
</dbReference>
<dbReference type="PRINTS" id="PR00249">
    <property type="entry name" value="GPCRSECRETIN"/>
</dbReference>
<dbReference type="SMART" id="SM00008">
    <property type="entry name" value="HormR"/>
    <property type="match status" value="1"/>
</dbReference>
<dbReference type="SUPFAM" id="SSF81321">
    <property type="entry name" value="Family A G protein-coupled receptor-like"/>
    <property type="match status" value="1"/>
</dbReference>
<dbReference type="SUPFAM" id="SSF111418">
    <property type="entry name" value="Hormone receptor domain"/>
    <property type="match status" value="1"/>
</dbReference>
<dbReference type="PROSITE" id="PS00649">
    <property type="entry name" value="G_PROTEIN_RECEP_F2_1"/>
    <property type="match status" value="1"/>
</dbReference>
<dbReference type="PROSITE" id="PS00650">
    <property type="entry name" value="G_PROTEIN_RECEP_F2_2"/>
    <property type="match status" value="1"/>
</dbReference>
<dbReference type="PROSITE" id="PS50227">
    <property type="entry name" value="G_PROTEIN_RECEP_F2_3"/>
    <property type="match status" value="1"/>
</dbReference>
<dbReference type="PROSITE" id="PS50261">
    <property type="entry name" value="G_PROTEIN_RECEP_F2_4"/>
    <property type="match status" value="1"/>
</dbReference>
<feature type="signal peptide" evidence="2">
    <location>
        <begin position="1"/>
        <end position="23"/>
    </location>
</feature>
<feature type="chain" id="PRO_0000373833" description="Calcitonin gene-related peptide type 1 receptor">
    <location>
        <begin position="24"/>
        <end position="470"/>
    </location>
</feature>
<feature type="topological domain" description="Extracellular" evidence="3">
    <location>
        <begin position="24"/>
        <end position="147"/>
    </location>
</feature>
<feature type="transmembrane region" description="Helical; Name=1" evidence="1">
    <location>
        <begin position="148"/>
        <end position="172"/>
    </location>
</feature>
<feature type="topological domain" description="Cytoplasmic" evidence="3">
    <location>
        <begin position="173"/>
        <end position="183"/>
    </location>
</feature>
<feature type="transmembrane region" description="Helical; Name=2" evidence="1">
    <location>
        <begin position="184"/>
        <end position="206"/>
    </location>
</feature>
<feature type="topological domain" description="Extracellular" evidence="3">
    <location>
        <begin position="207"/>
        <end position="217"/>
    </location>
</feature>
<feature type="transmembrane region" description="Helical; Name=3" evidence="1">
    <location>
        <begin position="218"/>
        <end position="246"/>
    </location>
</feature>
<feature type="topological domain" description="Cytoplasmic" evidence="3">
    <location>
        <begin position="247"/>
        <end position="260"/>
    </location>
</feature>
<feature type="transmembrane region" description="Helical; Name=4" evidence="1">
    <location>
        <begin position="261"/>
        <end position="281"/>
    </location>
</feature>
<feature type="topological domain" description="Extracellular" evidence="3">
    <location>
        <begin position="282"/>
        <end position="297"/>
    </location>
</feature>
<feature type="transmembrane region" description="Helical; Name=5" evidence="1">
    <location>
        <begin position="298"/>
        <end position="322"/>
    </location>
</feature>
<feature type="topological domain" description="Cytoplasmic" evidence="3">
    <location>
        <begin position="323"/>
        <end position="337"/>
    </location>
</feature>
<feature type="transmembrane region" description="Helical; Name=6" evidence="1">
    <location>
        <begin position="338"/>
        <end position="359"/>
    </location>
</feature>
<feature type="topological domain" description="Extracellular" evidence="3">
    <location>
        <begin position="360"/>
        <end position="374"/>
    </location>
</feature>
<feature type="transmembrane region" description="Helical; Name=7" evidence="1">
    <location>
        <begin position="375"/>
        <end position="395"/>
    </location>
</feature>
<feature type="topological domain" description="Cytoplasmic" evidence="3">
    <location>
        <begin position="396"/>
        <end position="470"/>
    </location>
</feature>
<feature type="glycosylation site" description="N-linked (GlcNAc...) asparagine" evidence="2">
    <location>
        <position position="28"/>
    </location>
</feature>
<feature type="glycosylation site" description="N-linked (GlcNAc...) asparagine" evidence="2">
    <location>
        <position position="74"/>
    </location>
</feature>
<feature type="glycosylation site" description="N-linked (GlcNAc...) asparagine" evidence="2">
    <location>
        <position position="126"/>
    </location>
</feature>
<feature type="glycosylation site" description="N-linked (GlcNAc...) asparagine" evidence="2">
    <location>
        <position position="131"/>
    </location>
</feature>
<feature type="glycosylation site" description="N-linked (GlcNAc...) asparagine" evidence="2">
    <location>
        <position position="295"/>
    </location>
</feature>
<feature type="disulfide bond" evidence="1">
    <location>
        <begin position="56"/>
        <end position="82"/>
    </location>
</feature>
<feature type="disulfide bond" evidence="1">
    <location>
        <begin position="73"/>
        <end position="113"/>
    </location>
</feature>
<feature type="disulfide bond" evidence="1">
    <location>
        <begin position="96"/>
        <end position="135"/>
    </location>
</feature>
<feature type="sequence conflict" description="In Ref. 2; AAI29301." evidence="3" ref="2">
    <original>C</original>
    <variation>R</variation>
    <location>
        <position position="82"/>
    </location>
</feature>
<feature type="sequence conflict" description="In Ref. 2; AAI29301." evidence="3" ref="2">
    <original>C</original>
    <variation>R</variation>
    <location>
        <position position="113"/>
    </location>
</feature>
<feature type="sequence conflict" description="In Ref. 2; AAI29301." evidence="3" ref="2">
    <original>Y</original>
    <variation>F</variation>
    <location>
        <position position="285"/>
    </location>
</feature>
<feature type="sequence conflict" description="In Ref. 1; CAQ13571 and 2; AAI29301." evidence="3" ref="1 2">
    <original>K</original>
    <variation>E</variation>
    <location>
        <position position="335"/>
    </location>
</feature>
<feature type="sequence conflict" description="In Ref. 1; CAQ13571." evidence="3" ref="1">
    <original>F</original>
    <variation>L</variation>
    <location>
        <position position="469"/>
    </location>
</feature>
<accession>Q68EK2</accession>
<accession>A1L211</accession>
<accession>B0S6C2</accession>
<name>CALRL_DANRE</name>
<proteinExistence type="evidence at transcript level"/>
<reference key="1">
    <citation type="journal article" date="2013" name="Nature">
        <title>The zebrafish reference genome sequence and its relationship to the human genome.</title>
        <authorList>
            <person name="Howe K."/>
            <person name="Clark M.D."/>
            <person name="Torroja C.F."/>
            <person name="Torrance J."/>
            <person name="Berthelot C."/>
            <person name="Muffato M."/>
            <person name="Collins J.E."/>
            <person name="Humphray S."/>
            <person name="McLaren K."/>
            <person name="Matthews L."/>
            <person name="McLaren S."/>
            <person name="Sealy I."/>
            <person name="Caccamo M."/>
            <person name="Churcher C."/>
            <person name="Scott C."/>
            <person name="Barrett J.C."/>
            <person name="Koch R."/>
            <person name="Rauch G.J."/>
            <person name="White S."/>
            <person name="Chow W."/>
            <person name="Kilian B."/>
            <person name="Quintais L.T."/>
            <person name="Guerra-Assuncao J.A."/>
            <person name="Zhou Y."/>
            <person name="Gu Y."/>
            <person name="Yen J."/>
            <person name="Vogel J.H."/>
            <person name="Eyre T."/>
            <person name="Redmond S."/>
            <person name="Banerjee R."/>
            <person name="Chi J."/>
            <person name="Fu B."/>
            <person name="Langley E."/>
            <person name="Maguire S.F."/>
            <person name="Laird G.K."/>
            <person name="Lloyd D."/>
            <person name="Kenyon E."/>
            <person name="Donaldson S."/>
            <person name="Sehra H."/>
            <person name="Almeida-King J."/>
            <person name="Loveland J."/>
            <person name="Trevanion S."/>
            <person name="Jones M."/>
            <person name="Quail M."/>
            <person name="Willey D."/>
            <person name="Hunt A."/>
            <person name="Burton J."/>
            <person name="Sims S."/>
            <person name="McLay K."/>
            <person name="Plumb B."/>
            <person name="Davis J."/>
            <person name="Clee C."/>
            <person name="Oliver K."/>
            <person name="Clark R."/>
            <person name="Riddle C."/>
            <person name="Elliot D."/>
            <person name="Threadgold G."/>
            <person name="Harden G."/>
            <person name="Ware D."/>
            <person name="Begum S."/>
            <person name="Mortimore B."/>
            <person name="Kerry G."/>
            <person name="Heath P."/>
            <person name="Phillimore B."/>
            <person name="Tracey A."/>
            <person name="Corby N."/>
            <person name="Dunn M."/>
            <person name="Johnson C."/>
            <person name="Wood J."/>
            <person name="Clark S."/>
            <person name="Pelan S."/>
            <person name="Griffiths G."/>
            <person name="Smith M."/>
            <person name="Glithero R."/>
            <person name="Howden P."/>
            <person name="Barker N."/>
            <person name="Lloyd C."/>
            <person name="Stevens C."/>
            <person name="Harley J."/>
            <person name="Holt K."/>
            <person name="Panagiotidis G."/>
            <person name="Lovell J."/>
            <person name="Beasley H."/>
            <person name="Henderson C."/>
            <person name="Gordon D."/>
            <person name="Auger K."/>
            <person name="Wright D."/>
            <person name="Collins J."/>
            <person name="Raisen C."/>
            <person name="Dyer L."/>
            <person name="Leung K."/>
            <person name="Robertson L."/>
            <person name="Ambridge K."/>
            <person name="Leongamornlert D."/>
            <person name="McGuire S."/>
            <person name="Gilderthorp R."/>
            <person name="Griffiths C."/>
            <person name="Manthravadi D."/>
            <person name="Nichol S."/>
            <person name="Barker G."/>
            <person name="Whitehead S."/>
            <person name="Kay M."/>
            <person name="Brown J."/>
            <person name="Murnane C."/>
            <person name="Gray E."/>
            <person name="Humphries M."/>
            <person name="Sycamore N."/>
            <person name="Barker D."/>
            <person name="Saunders D."/>
            <person name="Wallis J."/>
            <person name="Babbage A."/>
            <person name="Hammond S."/>
            <person name="Mashreghi-Mohammadi M."/>
            <person name="Barr L."/>
            <person name="Martin S."/>
            <person name="Wray P."/>
            <person name="Ellington A."/>
            <person name="Matthews N."/>
            <person name="Ellwood M."/>
            <person name="Woodmansey R."/>
            <person name="Clark G."/>
            <person name="Cooper J."/>
            <person name="Tromans A."/>
            <person name="Grafham D."/>
            <person name="Skuce C."/>
            <person name="Pandian R."/>
            <person name="Andrews R."/>
            <person name="Harrison E."/>
            <person name="Kimberley A."/>
            <person name="Garnett J."/>
            <person name="Fosker N."/>
            <person name="Hall R."/>
            <person name="Garner P."/>
            <person name="Kelly D."/>
            <person name="Bird C."/>
            <person name="Palmer S."/>
            <person name="Gehring I."/>
            <person name="Berger A."/>
            <person name="Dooley C.M."/>
            <person name="Ersan-Urun Z."/>
            <person name="Eser C."/>
            <person name="Geiger H."/>
            <person name="Geisler M."/>
            <person name="Karotki L."/>
            <person name="Kirn A."/>
            <person name="Konantz J."/>
            <person name="Konantz M."/>
            <person name="Oberlander M."/>
            <person name="Rudolph-Geiger S."/>
            <person name="Teucke M."/>
            <person name="Lanz C."/>
            <person name="Raddatz G."/>
            <person name="Osoegawa K."/>
            <person name="Zhu B."/>
            <person name="Rapp A."/>
            <person name="Widaa S."/>
            <person name="Langford C."/>
            <person name="Yang F."/>
            <person name="Schuster S.C."/>
            <person name="Carter N.P."/>
            <person name="Harrow J."/>
            <person name="Ning Z."/>
            <person name="Herrero J."/>
            <person name="Searle S.M."/>
            <person name="Enright A."/>
            <person name="Geisler R."/>
            <person name="Plasterk R.H."/>
            <person name="Lee C."/>
            <person name="Westerfield M."/>
            <person name="de Jong P.J."/>
            <person name="Zon L.I."/>
            <person name="Postlethwait J.H."/>
            <person name="Nusslein-Volhard C."/>
            <person name="Hubbard T.J."/>
            <person name="Roest Crollius H."/>
            <person name="Rogers J."/>
            <person name="Stemple D.L."/>
        </authorList>
    </citation>
    <scope>NUCLEOTIDE SEQUENCE [LARGE SCALE GENOMIC DNA]</scope>
    <source>
        <strain>Tuebingen</strain>
    </source>
</reference>
<reference key="2">
    <citation type="submission" date="2006-12" db="EMBL/GenBank/DDBJ databases">
        <authorList>
            <consortium name="NIH - Zebrafish Gene Collection (ZGC) project"/>
        </authorList>
    </citation>
    <scope>NUCLEOTIDE SEQUENCE [LARGE SCALE MRNA]</scope>
    <source>
        <tissue>Brain</tissue>
        <tissue>Embryo</tissue>
    </source>
</reference>